<dbReference type="EC" id="2.7.4.3" evidence="1"/>
<dbReference type="EMBL" id="AP009044">
    <property type="protein sequence ID" value="BAF53641.1"/>
    <property type="molecule type" value="Genomic_DNA"/>
</dbReference>
<dbReference type="RefSeq" id="WP_003854403.1">
    <property type="nucleotide sequence ID" value="NC_009342.1"/>
</dbReference>
<dbReference type="SMR" id="A4QBP4"/>
<dbReference type="GeneID" id="1018562"/>
<dbReference type="KEGG" id="cgt:cgR_0670"/>
<dbReference type="HOGENOM" id="CLU_032354_4_1_11"/>
<dbReference type="PhylomeDB" id="A4QBP4"/>
<dbReference type="UniPathway" id="UPA00588">
    <property type="reaction ID" value="UER00649"/>
</dbReference>
<dbReference type="Proteomes" id="UP000006698">
    <property type="component" value="Chromosome"/>
</dbReference>
<dbReference type="GO" id="GO:0005737">
    <property type="term" value="C:cytoplasm"/>
    <property type="evidence" value="ECO:0007669"/>
    <property type="project" value="UniProtKB-SubCell"/>
</dbReference>
<dbReference type="GO" id="GO:0004017">
    <property type="term" value="F:adenylate kinase activity"/>
    <property type="evidence" value="ECO:0007669"/>
    <property type="project" value="UniProtKB-UniRule"/>
</dbReference>
<dbReference type="GO" id="GO:0005524">
    <property type="term" value="F:ATP binding"/>
    <property type="evidence" value="ECO:0007669"/>
    <property type="project" value="UniProtKB-UniRule"/>
</dbReference>
<dbReference type="GO" id="GO:0044209">
    <property type="term" value="P:AMP salvage"/>
    <property type="evidence" value="ECO:0007669"/>
    <property type="project" value="UniProtKB-UniRule"/>
</dbReference>
<dbReference type="CDD" id="cd01428">
    <property type="entry name" value="ADK"/>
    <property type="match status" value="1"/>
</dbReference>
<dbReference type="Gene3D" id="3.40.50.300">
    <property type="entry name" value="P-loop containing nucleotide triphosphate hydrolases"/>
    <property type="match status" value="1"/>
</dbReference>
<dbReference type="HAMAP" id="MF_00235">
    <property type="entry name" value="Adenylate_kinase_Adk"/>
    <property type="match status" value="1"/>
</dbReference>
<dbReference type="InterPro" id="IPR000850">
    <property type="entry name" value="Adenylat/UMP-CMP_kin"/>
</dbReference>
<dbReference type="InterPro" id="IPR033690">
    <property type="entry name" value="Adenylat_kinase_CS"/>
</dbReference>
<dbReference type="InterPro" id="IPR027417">
    <property type="entry name" value="P-loop_NTPase"/>
</dbReference>
<dbReference type="NCBIfam" id="NF001381">
    <property type="entry name" value="PRK00279.1-3"/>
    <property type="match status" value="1"/>
</dbReference>
<dbReference type="NCBIfam" id="NF011100">
    <property type="entry name" value="PRK14527.1"/>
    <property type="match status" value="1"/>
</dbReference>
<dbReference type="NCBIfam" id="NF011101">
    <property type="entry name" value="PRK14528.1"/>
    <property type="match status" value="1"/>
</dbReference>
<dbReference type="NCBIfam" id="NF011104">
    <property type="entry name" value="PRK14531.1"/>
    <property type="match status" value="1"/>
</dbReference>
<dbReference type="PANTHER" id="PTHR23359">
    <property type="entry name" value="NUCLEOTIDE KINASE"/>
    <property type="match status" value="1"/>
</dbReference>
<dbReference type="Pfam" id="PF00406">
    <property type="entry name" value="ADK"/>
    <property type="match status" value="1"/>
</dbReference>
<dbReference type="PRINTS" id="PR00094">
    <property type="entry name" value="ADENYLTKNASE"/>
</dbReference>
<dbReference type="SUPFAM" id="SSF52540">
    <property type="entry name" value="P-loop containing nucleoside triphosphate hydrolases"/>
    <property type="match status" value="1"/>
</dbReference>
<dbReference type="PROSITE" id="PS00113">
    <property type="entry name" value="ADENYLATE_KINASE"/>
    <property type="match status" value="1"/>
</dbReference>
<name>KAD_CORGB</name>
<accession>A4QBP4</accession>
<reference key="1">
    <citation type="journal article" date="2007" name="Microbiology">
        <title>Comparative analysis of the Corynebacterium glutamicum group and complete genome sequence of strain R.</title>
        <authorList>
            <person name="Yukawa H."/>
            <person name="Omumasaba C.A."/>
            <person name="Nonaka H."/>
            <person name="Kos P."/>
            <person name="Okai N."/>
            <person name="Suzuki N."/>
            <person name="Suda M."/>
            <person name="Tsuge Y."/>
            <person name="Watanabe J."/>
            <person name="Ikeda Y."/>
            <person name="Vertes A.A."/>
            <person name="Inui M."/>
        </authorList>
    </citation>
    <scope>NUCLEOTIDE SEQUENCE [LARGE SCALE GENOMIC DNA]</scope>
    <source>
        <strain>R</strain>
    </source>
</reference>
<sequence length="181" mass="19427">MRLVLLGPPGAGKGTQAAILSEKLGIPHISTGDLFRANIGEGTPLGIEAKQYIDAGKLVPTDVTARMVASRLAESDAAEGFLLDGFPRTVEQADILANLLSEAGQTLDGVVNYQVSEDVVVERMLSRGRADDNEETIRTRLGVYRDETAPLIDHYGDKIINIEAEGEVEEINARTLKALGK</sequence>
<comment type="function">
    <text evidence="1">Catalyzes the reversible transfer of the terminal phosphate group between ATP and AMP. Plays an important role in cellular energy homeostasis and in adenine nucleotide metabolism.</text>
</comment>
<comment type="catalytic activity">
    <reaction evidence="1">
        <text>AMP + ATP = 2 ADP</text>
        <dbReference type="Rhea" id="RHEA:12973"/>
        <dbReference type="ChEBI" id="CHEBI:30616"/>
        <dbReference type="ChEBI" id="CHEBI:456215"/>
        <dbReference type="ChEBI" id="CHEBI:456216"/>
        <dbReference type="EC" id="2.7.4.3"/>
    </reaction>
</comment>
<comment type="pathway">
    <text evidence="1">Purine metabolism; AMP biosynthesis via salvage pathway; AMP from ADP: step 1/1.</text>
</comment>
<comment type="subunit">
    <text evidence="1">Monomer.</text>
</comment>
<comment type="subcellular location">
    <subcellularLocation>
        <location evidence="1">Cytoplasm</location>
    </subcellularLocation>
</comment>
<comment type="domain">
    <text evidence="1">Consists of three domains, a large central CORE domain and two small peripheral domains, NMPbind and LID, which undergo movements during catalysis. The LID domain closes over the site of phosphoryl transfer upon ATP binding. Assembling and dissambling the active center during each catalytic cycle provides an effective means to prevent ATP hydrolysis.</text>
</comment>
<comment type="similarity">
    <text evidence="1">Belongs to the adenylate kinase family.</text>
</comment>
<evidence type="ECO:0000255" key="1">
    <source>
        <dbReference type="HAMAP-Rule" id="MF_00235"/>
    </source>
</evidence>
<proteinExistence type="inferred from homology"/>
<organism>
    <name type="scientific">Corynebacterium glutamicum (strain R)</name>
    <dbReference type="NCBI Taxonomy" id="340322"/>
    <lineage>
        <taxon>Bacteria</taxon>
        <taxon>Bacillati</taxon>
        <taxon>Actinomycetota</taxon>
        <taxon>Actinomycetes</taxon>
        <taxon>Mycobacteriales</taxon>
        <taxon>Corynebacteriaceae</taxon>
        <taxon>Corynebacterium</taxon>
    </lineage>
</organism>
<gene>
    <name evidence="1" type="primary">adk</name>
    <name type="ordered locus">cgR_0670</name>
</gene>
<protein>
    <recommendedName>
        <fullName evidence="1">Adenylate kinase</fullName>
        <shortName evidence="1">AK</shortName>
        <ecNumber evidence="1">2.7.4.3</ecNumber>
    </recommendedName>
    <alternativeName>
        <fullName evidence="1">ATP-AMP transphosphorylase</fullName>
    </alternativeName>
    <alternativeName>
        <fullName evidence="1">ATP:AMP phosphotransferase</fullName>
    </alternativeName>
    <alternativeName>
        <fullName evidence="1">Adenylate monophosphate kinase</fullName>
    </alternativeName>
</protein>
<keyword id="KW-0067">ATP-binding</keyword>
<keyword id="KW-0963">Cytoplasm</keyword>
<keyword id="KW-0418">Kinase</keyword>
<keyword id="KW-0545">Nucleotide biosynthesis</keyword>
<keyword id="KW-0547">Nucleotide-binding</keyword>
<keyword id="KW-0808">Transferase</keyword>
<feature type="chain" id="PRO_1000058818" description="Adenylate kinase">
    <location>
        <begin position="1"/>
        <end position="181"/>
    </location>
</feature>
<feature type="region of interest" description="NMP" evidence="1">
    <location>
        <begin position="30"/>
        <end position="59"/>
    </location>
</feature>
<feature type="region of interest" description="LID" evidence="1">
    <location>
        <begin position="126"/>
        <end position="132"/>
    </location>
</feature>
<feature type="binding site" evidence="1">
    <location>
        <begin position="10"/>
        <end position="15"/>
    </location>
    <ligand>
        <name>ATP</name>
        <dbReference type="ChEBI" id="CHEBI:30616"/>
    </ligand>
</feature>
<feature type="binding site" evidence="1">
    <location>
        <position position="31"/>
    </location>
    <ligand>
        <name>AMP</name>
        <dbReference type="ChEBI" id="CHEBI:456215"/>
    </ligand>
</feature>
<feature type="binding site" evidence="1">
    <location>
        <position position="36"/>
    </location>
    <ligand>
        <name>AMP</name>
        <dbReference type="ChEBI" id="CHEBI:456215"/>
    </ligand>
</feature>
<feature type="binding site" evidence="1">
    <location>
        <begin position="57"/>
        <end position="59"/>
    </location>
    <ligand>
        <name>AMP</name>
        <dbReference type="ChEBI" id="CHEBI:456215"/>
    </ligand>
</feature>
<feature type="binding site" evidence="1">
    <location>
        <begin position="85"/>
        <end position="88"/>
    </location>
    <ligand>
        <name>AMP</name>
        <dbReference type="ChEBI" id="CHEBI:456215"/>
    </ligand>
</feature>
<feature type="binding site" evidence="1">
    <location>
        <position position="92"/>
    </location>
    <ligand>
        <name>AMP</name>
        <dbReference type="ChEBI" id="CHEBI:456215"/>
    </ligand>
</feature>
<feature type="binding site" evidence="1">
    <location>
        <position position="127"/>
    </location>
    <ligand>
        <name>ATP</name>
        <dbReference type="ChEBI" id="CHEBI:30616"/>
    </ligand>
</feature>
<feature type="binding site" evidence="1">
    <location>
        <position position="129"/>
    </location>
    <ligand>
        <name>AMP</name>
        <dbReference type="ChEBI" id="CHEBI:456215"/>
    </ligand>
</feature>
<feature type="binding site" evidence="1">
    <location>
        <position position="140"/>
    </location>
    <ligand>
        <name>AMP</name>
        <dbReference type="ChEBI" id="CHEBI:456215"/>
    </ligand>
</feature>
<feature type="binding site" evidence="1">
    <location>
        <position position="166"/>
    </location>
    <ligand>
        <name>ATP</name>
        <dbReference type="ChEBI" id="CHEBI:30616"/>
    </ligand>
</feature>